<protein>
    <recommendedName>
        <fullName evidence="1">Photosystem I assembly protein Ycf3</fullName>
    </recommendedName>
</protein>
<reference key="1">
    <citation type="journal article" date="2006" name="Mol. Biol. Evol.">
        <title>The chloroplast genome sequence of Chara vulgaris sheds new light into the closest green algal relatives of land plants.</title>
        <authorList>
            <person name="Turmel M."/>
            <person name="Otis C."/>
            <person name="Lemieux C."/>
        </authorList>
    </citation>
    <scope>NUCLEOTIDE SEQUENCE [LARGE SCALE GENOMIC DNA]</scope>
</reference>
<proteinExistence type="inferred from homology"/>
<evidence type="ECO:0000255" key="1">
    <source>
        <dbReference type="HAMAP-Rule" id="MF_00439"/>
    </source>
</evidence>
<dbReference type="EMBL" id="DQ229107">
    <property type="protein sequence ID" value="ABA61897.1"/>
    <property type="molecule type" value="Genomic_DNA"/>
</dbReference>
<dbReference type="RefSeq" id="YP_635723.1">
    <property type="nucleotide sequence ID" value="NC_008097.1"/>
</dbReference>
<dbReference type="SMR" id="Q1ACM4"/>
<dbReference type="GeneID" id="4100246"/>
<dbReference type="GO" id="GO:0009535">
    <property type="term" value="C:chloroplast thylakoid membrane"/>
    <property type="evidence" value="ECO:0007669"/>
    <property type="project" value="UniProtKB-SubCell"/>
</dbReference>
<dbReference type="GO" id="GO:0015979">
    <property type="term" value="P:photosynthesis"/>
    <property type="evidence" value="ECO:0007669"/>
    <property type="project" value="UniProtKB-UniRule"/>
</dbReference>
<dbReference type="FunFam" id="1.25.40.10:FF:000004">
    <property type="entry name" value="Photosystem I assembly protein Ycf3"/>
    <property type="match status" value="1"/>
</dbReference>
<dbReference type="Gene3D" id="1.25.40.10">
    <property type="entry name" value="Tetratricopeptide repeat domain"/>
    <property type="match status" value="1"/>
</dbReference>
<dbReference type="HAMAP" id="MF_00439">
    <property type="entry name" value="Ycf3"/>
    <property type="match status" value="1"/>
</dbReference>
<dbReference type="InterPro" id="IPR022818">
    <property type="entry name" value="PSI_Ycf3_assembly"/>
</dbReference>
<dbReference type="InterPro" id="IPR011990">
    <property type="entry name" value="TPR-like_helical_dom_sf"/>
</dbReference>
<dbReference type="InterPro" id="IPR019734">
    <property type="entry name" value="TPR_rpt"/>
</dbReference>
<dbReference type="InterPro" id="IPR051685">
    <property type="entry name" value="Ycf3/AcsC/BcsC/TPR_MFPF"/>
</dbReference>
<dbReference type="NCBIfam" id="NF002725">
    <property type="entry name" value="PRK02603.1"/>
    <property type="match status" value="1"/>
</dbReference>
<dbReference type="PANTHER" id="PTHR44943">
    <property type="entry name" value="CELLULOSE SYNTHASE OPERON PROTEIN C"/>
    <property type="match status" value="1"/>
</dbReference>
<dbReference type="PANTHER" id="PTHR44943:SF8">
    <property type="entry name" value="TPR REPEAT-CONTAINING PROTEIN MJ0263"/>
    <property type="match status" value="1"/>
</dbReference>
<dbReference type="Pfam" id="PF00515">
    <property type="entry name" value="TPR_1"/>
    <property type="match status" value="1"/>
</dbReference>
<dbReference type="SMART" id="SM00028">
    <property type="entry name" value="TPR"/>
    <property type="match status" value="3"/>
</dbReference>
<dbReference type="SUPFAM" id="SSF48452">
    <property type="entry name" value="TPR-like"/>
    <property type="match status" value="1"/>
</dbReference>
<dbReference type="PROSITE" id="PS50005">
    <property type="entry name" value="TPR"/>
    <property type="match status" value="3"/>
</dbReference>
<dbReference type="PROSITE" id="PS50293">
    <property type="entry name" value="TPR_REGION"/>
    <property type="match status" value="1"/>
</dbReference>
<keyword id="KW-0150">Chloroplast</keyword>
<keyword id="KW-0472">Membrane</keyword>
<keyword id="KW-0602">Photosynthesis</keyword>
<keyword id="KW-0934">Plastid</keyword>
<keyword id="KW-0677">Repeat</keyword>
<keyword id="KW-0793">Thylakoid</keyword>
<keyword id="KW-0802">TPR repeat</keyword>
<comment type="function">
    <text evidence="1">Essential for the assembly of the photosystem I (PSI) complex. May act as a chaperone-like factor to guide the assembly of the PSI subunits.</text>
</comment>
<comment type="subcellular location">
    <subcellularLocation>
        <location evidence="1">Plastid</location>
        <location evidence="1">Chloroplast thylakoid membrane</location>
        <topology evidence="1">Peripheral membrane protein</topology>
    </subcellularLocation>
</comment>
<comment type="similarity">
    <text evidence="1">Belongs to the Ycf3 family.</text>
</comment>
<feature type="chain" id="PRO_0000275611" description="Photosystem I assembly protein Ycf3">
    <location>
        <begin position="1"/>
        <end position="167"/>
    </location>
</feature>
<feature type="repeat" description="TPR 1">
    <location>
        <begin position="35"/>
        <end position="68"/>
    </location>
</feature>
<feature type="repeat" description="TPR 2">
    <location>
        <begin position="72"/>
        <end position="105"/>
    </location>
</feature>
<feature type="repeat" description="TPR 3">
    <location>
        <begin position="120"/>
        <end position="153"/>
    </location>
</feature>
<name>YCF3_CHAVU</name>
<geneLocation type="chloroplast"/>
<organism>
    <name type="scientific">Chara vulgaris</name>
    <name type="common">Common stonewort</name>
    <dbReference type="NCBI Taxonomy" id="55564"/>
    <lineage>
        <taxon>Eukaryota</taxon>
        <taxon>Viridiplantae</taxon>
        <taxon>Streptophyta</taxon>
        <taxon>Charophyceae</taxon>
        <taxon>Charales</taxon>
        <taxon>Characeae</taxon>
        <taxon>Chara</taxon>
    </lineage>
</organism>
<accession>Q1ACM4</accession>
<gene>
    <name evidence="1" type="primary">ycf3</name>
</gene>
<sequence>MPRSQKNDNFIDKTFTIIADILLRIVPTSQREREAFTYYRDGMSAQAEGEYAEALQNYYEAMRLEIDPYDRSYILYNIGLIHTSNGEHAKALEYYFQALERNPSLPQAFNNVAVICHYRGEQAIQQQDIESSKAWFNQAAEYWKQAIQLAPGNYIEAQNWLKITGRI</sequence>